<reference key="1">
    <citation type="journal article" date="2006" name="J. Bacteriol.">
        <title>Complete genome sequence of Yersinia pestis strains Antiqua and Nepal516: evidence of gene reduction in an emerging pathogen.</title>
        <authorList>
            <person name="Chain P.S.G."/>
            <person name="Hu P."/>
            <person name="Malfatti S.A."/>
            <person name="Radnedge L."/>
            <person name="Larimer F."/>
            <person name="Vergez L.M."/>
            <person name="Worsham P."/>
            <person name="Chu M.C."/>
            <person name="Andersen G.L."/>
        </authorList>
    </citation>
    <scope>NUCLEOTIDE SEQUENCE [LARGE SCALE GENOMIC DNA]</scope>
    <source>
        <strain>Nepal516</strain>
    </source>
</reference>
<reference key="2">
    <citation type="submission" date="2009-04" db="EMBL/GenBank/DDBJ databases">
        <title>Yersinia pestis Nepal516A whole genome shotgun sequencing project.</title>
        <authorList>
            <person name="Plunkett G. III"/>
            <person name="Anderson B.D."/>
            <person name="Baumler D.J."/>
            <person name="Burland V."/>
            <person name="Cabot E.L."/>
            <person name="Glasner J.D."/>
            <person name="Mau B."/>
            <person name="Neeno-Eckwall E."/>
            <person name="Perna N.T."/>
            <person name="Munk A.C."/>
            <person name="Tapia R."/>
            <person name="Green L.D."/>
            <person name="Rogers Y.C."/>
            <person name="Detter J.C."/>
            <person name="Bruce D.C."/>
            <person name="Brettin T.S."/>
        </authorList>
    </citation>
    <scope>NUCLEOTIDE SEQUENCE [LARGE SCALE GENOMIC DNA]</scope>
    <source>
        <strain>Nepal516</strain>
    </source>
</reference>
<keyword id="KW-0028">Amino-acid biosynthesis</keyword>
<keyword id="KW-0032">Aminotransferase</keyword>
<keyword id="KW-0368">Histidine biosynthesis</keyword>
<keyword id="KW-0663">Pyridoxal phosphate</keyword>
<keyword id="KW-0808">Transferase</keyword>
<comment type="catalytic activity">
    <reaction evidence="1">
        <text>L-histidinol phosphate + 2-oxoglutarate = 3-(imidazol-4-yl)-2-oxopropyl phosphate + L-glutamate</text>
        <dbReference type="Rhea" id="RHEA:23744"/>
        <dbReference type="ChEBI" id="CHEBI:16810"/>
        <dbReference type="ChEBI" id="CHEBI:29985"/>
        <dbReference type="ChEBI" id="CHEBI:57766"/>
        <dbReference type="ChEBI" id="CHEBI:57980"/>
        <dbReference type="EC" id="2.6.1.9"/>
    </reaction>
</comment>
<comment type="cofactor">
    <cofactor evidence="1">
        <name>pyridoxal 5'-phosphate</name>
        <dbReference type="ChEBI" id="CHEBI:597326"/>
    </cofactor>
</comment>
<comment type="pathway">
    <text evidence="1">Amino-acid biosynthesis; L-histidine biosynthesis; L-histidine from 5-phospho-alpha-D-ribose 1-diphosphate: step 7/9.</text>
</comment>
<comment type="subunit">
    <text evidence="1">Homodimer.</text>
</comment>
<comment type="similarity">
    <text evidence="1">Belongs to the class-II pyridoxal-phosphate-dependent aminotransferase family. Histidinol-phosphate aminotransferase subfamily.</text>
</comment>
<sequence>MSQSNNVTDLARANIRALTPYMSARRLGGNGDVWLNANEYPLGTEYQLTTQTFNRYPECQPKHVIERYAAYAGLPPEQVLVSRGADEGIELLIRAFCEPGQDAILFCPPTYGMYAVSAETFGVERRTVPAQADWQLDLPAIANNLEQVKVIYVCSPNNPTGNLINPADLQAVLALAQGRAIVAIDEAYIEFCPQASVSNWLKDYPNLVILRTLSKAFALAGLRCGFTLANSDIIQLLLKVIAPYPLSTPVADIAAQALSPKGIEQMRQRVSEVRANRAWLQSALQDCACVEQVFTSESNYLLARFTASSSVFNALWDQGIILRDQNKQPGLANCLRITIGTRQECERVIAALAPLPGIDNSNNIDNQNKTYSQTSSIRKGTI</sequence>
<feature type="chain" id="PRO_1000063514" description="Histidinol-phosphate aminotransferase">
    <location>
        <begin position="1"/>
        <end position="382"/>
    </location>
</feature>
<feature type="region of interest" description="Disordered" evidence="2">
    <location>
        <begin position="363"/>
        <end position="382"/>
    </location>
</feature>
<feature type="modified residue" description="N6-(pyridoxal phosphate)lysine" evidence="1">
    <location>
        <position position="215"/>
    </location>
</feature>
<proteinExistence type="inferred from homology"/>
<name>HIS8_YERPN</name>
<evidence type="ECO:0000255" key="1">
    <source>
        <dbReference type="HAMAP-Rule" id="MF_01023"/>
    </source>
</evidence>
<evidence type="ECO:0000256" key="2">
    <source>
        <dbReference type="SAM" id="MobiDB-lite"/>
    </source>
</evidence>
<gene>
    <name evidence="1" type="primary">hisC</name>
    <name type="ordered locus">YPN_2432</name>
    <name type="ORF">YP516_2743</name>
</gene>
<protein>
    <recommendedName>
        <fullName evidence="1">Histidinol-phosphate aminotransferase</fullName>
        <ecNumber evidence="1">2.6.1.9</ecNumber>
    </recommendedName>
    <alternativeName>
        <fullName evidence="1">Imidazole acetol-phosphate transaminase</fullName>
    </alternativeName>
</protein>
<dbReference type="EC" id="2.6.1.9" evidence="1"/>
<dbReference type="EMBL" id="CP000305">
    <property type="protein sequence ID" value="ABG18760.1"/>
    <property type="molecule type" value="Genomic_DNA"/>
</dbReference>
<dbReference type="EMBL" id="ACNQ01000014">
    <property type="protein sequence ID" value="EEO75998.1"/>
    <property type="molecule type" value="Genomic_DNA"/>
</dbReference>
<dbReference type="RefSeq" id="WP_002211894.1">
    <property type="nucleotide sequence ID" value="NZ_ACNQ01000014.1"/>
</dbReference>
<dbReference type="SMR" id="Q1CGX0"/>
<dbReference type="GeneID" id="57977021"/>
<dbReference type="KEGG" id="ypn:YPN_2432"/>
<dbReference type="HOGENOM" id="CLU_017584_3_1_6"/>
<dbReference type="UniPathway" id="UPA00031">
    <property type="reaction ID" value="UER00012"/>
</dbReference>
<dbReference type="Proteomes" id="UP000008936">
    <property type="component" value="Chromosome"/>
</dbReference>
<dbReference type="GO" id="GO:0004400">
    <property type="term" value="F:histidinol-phosphate transaminase activity"/>
    <property type="evidence" value="ECO:0007669"/>
    <property type="project" value="UniProtKB-UniRule"/>
</dbReference>
<dbReference type="GO" id="GO:0030170">
    <property type="term" value="F:pyridoxal phosphate binding"/>
    <property type="evidence" value="ECO:0007669"/>
    <property type="project" value="InterPro"/>
</dbReference>
<dbReference type="GO" id="GO:0000105">
    <property type="term" value="P:L-histidine biosynthetic process"/>
    <property type="evidence" value="ECO:0007669"/>
    <property type="project" value="UniProtKB-UniRule"/>
</dbReference>
<dbReference type="CDD" id="cd00609">
    <property type="entry name" value="AAT_like"/>
    <property type="match status" value="1"/>
</dbReference>
<dbReference type="Gene3D" id="3.90.1150.10">
    <property type="entry name" value="Aspartate Aminotransferase, domain 1"/>
    <property type="match status" value="1"/>
</dbReference>
<dbReference type="Gene3D" id="3.40.640.10">
    <property type="entry name" value="Type I PLP-dependent aspartate aminotransferase-like (Major domain)"/>
    <property type="match status" value="1"/>
</dbReference>
<dbReference type="HAMAP" id="MF_01023">
    <property type="entry name" value="HisC_aminotrans_2"/>
    <property type="match status" value="1"/>
</dbReference>
<dbReference type="InterPro" id="IPR001917">
    <property type="entry name" value="Aminotrans_II_pyridoxalP_BS"/>
</dbReference>
<dbReference type="InterPro" id="IPR004839">
    <property type="entry name" value="Aminotransferase_I/II_large"/>
</dbReference>
<dbReference type="InterPro" id="IPR005861">
    <property type="entry name" value="HisP_aminotrans"/>
</dbReference>
<dbReference type="InterPro" id="IPR015424">
    <property type="entry name" value="PyrdxlP-dep_Trfase"/>
</dbReference>
<dbReference type="InterPro" id="IPR015421">
    <property type="entry name" value="PyrdxlP-dep_Trfase_major"/>
</dbReference>
<dbReference type="InterPro" id="IPR015422">
    <property type="entry name" value="PyrdxlP-dep_Trfase_small"/>
</dbReference>
<dbReference type="NCBIfam" id="TIGR01141">
    <property type="entry name" value="hisC"/>
    <property type="match status" value="1"/>
</dbReference>
<dbReference type="PANTHER" id="PTHR42885:SF2">
    <property type="entry name" value="HISTIDINOL-PHOSPHATE AMINOTRANSFERASE"/>
    <property type="match status" value="1"/>
</dbReference>
<dbReference type="PANTHER" id="PTHR42885">
    <property type="entry name" value="HISTIDINOL-PHOSPHATE AMINOTRANSFERASE-RELATED"/>
    <property type="match status" value="1"/>
</dbReference>
<dbReference type="Pfam" id="PF00155">
    <property type="entry name" value="Aminotran_1_2"/>
    <property type="match status" value="1"/>
</dbReference>
<dbReference type="SUPFAM" id="SSF53383">
    <property type="entry name" value="PLP-dependent transferases"/>
    <property type="match status" value="1"/>
</dbReference>
<dbReference type="PROSITE" id="PS00599">
    <property type="entry name" value="AA_TRANSFER_CLASS_2"/>
    <property type="match status" value="1"/>
</dbReference>
<organism>
    <name type="scientific">Yersinia pestis bv. Antiqua (strain Nepal516)</name>
    <dbReference type="NCBI Taxonomy" id="377628"/>
    <lineage>
        <taxon>Bacteria</taxon>
        <taxon>Pseudomonadati</taxon>
        <taxon>Pseudomonadota</taxon>
        <taxon>Gammaproteobacteria</taxon>
        <taxon>Enterobacterales</taxon>
        <taxon>Yersiniaceae</taxon>
        <taxon>Yersinia</taxon>
    </lineage>
</organism>
<accession>Q1CGX0</accession>
<accession>C4GVB4</accession>